<feature type="chain" id="PRO_0000325279" description="Lipoyl synthase">
    <location>
        <begin position="1"/>
        <end position="298"/>
    </location>
</feature>
<feature type="domain" description="Radical SAM core" evidence="2">
    <location>
        <begin position="49"/>
        <end position="266"/>
    </location>
</feature>
<feature type="binding site" evidence="1">
    <location>
        <position position="37"/>
    </location>
    <ligand>
        <name>[4Fe-4S] cluster</name>
        <dbReference type="ChEBI" id="CHEBI:49883"/>
        <label>1</label>
    </ligand>
</feature>
<feature type="binding site" evidence="1">
    <location>
        <position position="42"/>
    </location>
    <ligand>
        <name>[4Fe-4S] cluster</name>
        <dbReference type="ChEBI" id="CHEBI:49883"/>
        <label>1</label>
    </ligand>
</feature>
<feature type="binding site" evidence="1">
    <location>
        <position position="48"/>
    </location>
    <ligand>
        <name>[4Fe-4S] cluster</name>
        <dbReference type="ChEBI" id="CHEBI:49883"/>
        <label>1</label>
    </ligand>
</feature>
<feature type="binding site" evidence="1">
    <location>
        <position position="63"/>
    </location>
    <ligand>
        <name>[4Fe-4S] cluster</name>
        <dbReference type="ChEBI" id="CHEBI:49883"/>
        <label>2</label>
        <note>4Fe-4S-S-AdoMet</note>
    </ligand>
</feature>
<feature type="binding site" evidence="1">
    <location>
        <position position="67"/>
    </location>
    <ligand>
        <name>[4Fe-4S] cluster</name>
        <dbReference type="ChEBI" id="CHEBI:49883"/>
        <label>2</label>
        <note>4Fe-4S-S-AdoMet</note>
    </ligand>
</feature>
<feature type="binding site" evidence="1">
    <location>
        <position position="70"/>
    </location>
    <ligand>
        <name>[4Fe-4S] cluster</name>
        <dbReference type="ChEBI" id="CHEBI:49883"/>
        <label>2</label>
        <note>4Fe-4S-S-AdoMet</note>
    </ligand>
</feature>
<feature type="binding site" evidence="1">
    <location>
        <position position="277"/>
    </location>
    <ligand>
        <name>[4Fe-4S] cluster</name>
        <dbReference type="ChEBI" id="CHEBI:49883"/>
        <label>1</label>
    </ligand>
</feature>
<comment type="function">
    <text evidence="1">Catalyzes the radical-mediated insertion of two sulfur atoms into the C-6 and C-8 positions of the octanoyl moiety bound to the lipoyl domains of lipoate-dependent enzymes, thereby converting the octanoylated domains into lipoylated derivatives.</text>
</comment>
<comment type="catalytic activity">
    <reaction evidence="1">
        <text>[[Fe-S] cluster scaffold protein carrying a second [4Fe-4S](2+) cluster] + N(6)-octanoyl-L-lysyl-[protein] + 2 oxidized [2Fe-2S]-[ferredoxin] + 2 S-adenosyl-L-methionine + 4 H(+) = [[Fe-S] cluster scaffold protein] + N(6)-[(R)-dihydrolipoyl]-L-lysyl-[protein] + 4 Fe(3+) + 2 hydrogen sulfide + 2 5'-deoxyadenosine + 2 L-methionine + 2 reduced [2Fe-2S]-[ferredoxin]</text>
        <dbReference type="Rhea" id="RHEA:16585"/>
        <dbReference type="Rhea" id="RHEA-COMP:9928"/>
        <dbReference type="Rhea" id="RHEA-COMP:10000"/>
        <dbReference type="Rhea" id="RHEA-COMP:10001"/>
        <dbReference type="Rhea" id="RHEA-COMP:10475"/>
        <dbReference type="Rhea" id="RHEA-COMP:14568"/>
        <dbReference type="Rhea" id="RHEA-COMP:14569"/>
        <dbReference type="ChEBI" id="CHEBI:15378"/>
        <dbReference type="ChEBI" id="CHEBI:17319"/>
        <dbReference type="ChEBI" id="CHEBI:29034"/>
        <dbReference type="ChEBI" id="CHEBI:29919"/>
        <dbReference type="ChEBI" id="CHEBI:33722"/>
        <dbReference type="ChEBI" id="CHEBI:33737"/>
        <dbReference type="ChEBI" id="CHEBI:33738"/>
        <dbReference type="ChEBI" id="CHEBI:57844"/>
        <dbReference type="ChEBI" id="CHEBI:59789"/>
        <dbReference type="ChEBI" id="CHEBI:78809"/>
        <dbReference type="ChEBI" id="CHEBI:83100"/>
        <dbReference type="EC" id="2.8.1.8"/>
    </reaction>
</comment>
<comment type="cofactor">
    <cofactor evidence="1">
        <name>[4Fe-4S] cluster</name>
        <dbReference type="ChEBI" id="CHEBI:49883"/>
    </cofactor>
    <text evidence="1">Binds 2 [4Fe-4S] clusters per subunit. One cluster is coordinated with 3 cysteines and an exchangeable S-adenosyl-L-methionine.</text>
</comment>
<comment type="pathway">
    <text evidence="1">Protein modification; protein lipoylation via endogenous pathway; protein N(6)-(lipoyl)lysine from octanoyl-[acyl-carrier-protein]: step 2/2.</text>
</comment>
<comment type="subcellular location">
    <subcellularLocation>
        <location evidence="1">Cytoplasm</location>
    </subcellularLocation>
</comment>
<comment type="similarity">
    <text evidence="1">Belongs to the radical SAM superfamily. Lipoyl synthase family.</text>
</comment>
<comment type="sequence caution" evidence="3">
    <conflict type="erroneous initiation">
        <sequence resource="EMBL-CDS" id="ABF91066"/>
    </conflict>
</comment>
<organism>
    <name type="scientific">Myxococcus xanthus (strain DK1622)</name>
    <dbReference type="NCBI Taxonomy" id="246197"/>
    <lineage>
        <taxon>Bacteria</taxon>
        <taxon>Pseudomonadati</taxon>
        <taxon>Myxococcota</taxon>
        <taxon>Myxococcia</taxon>
        <taxon>Myxococcales</taxon>
        <taxon>Cystobacterineae</taxon>
        <taxon>Myxococcaceae</taxon>
        <taxon>Myxococcus</taxon>
    </lineage>
</organism>
<name>LIPA_MYXXD</name>
<dbReference type="EC" id="2.8.1.8" evidence="1"/>
<dbReference type="EMBL" id="CP000113">
    <property type="protein sequence ID" value="ABF91066.1"/>
    <property type="status" value="ALT_INIT"/>
    <property type="molecule type" value="Genomic_DNA"/>
</dbReference>
<dbReference type="RefSeq" id="WP_011554221.1">
    <property type="nucleotide sequence ID" value="NC_008095.1"/>
</dbReference>
<dbReference type="SMR" id="Q1D4N0"/>
<dbReference type="STRING" id="246197.MXAN_4218"/>
<dbReference type="EnsemblBacteria" id="ABF91066">
    <property type="protein sequence ID" value="ABF91066"/>
    <property type="gene ID" value="MXAN_4218"/>
</dbReference>
<dbReference type="GeneID" id="41361535"/>
<dbReference type="KEGG" id="mxa:MXAN_4218"/>
<dbReference type="eggNOG" id="COG0320">
    <property type="taxonomic scope" value="Bacteria"/>
</dbReference>
<dbReference type="HOGENOM" id="CLU_033144_2_1_7"/>
<dbReference type="OrthoDB" id="9787898at2"/>
<dbReference type="UniPathway" id="UPA00538">
    <property type="reaction ID" value="UER00593"/>
</dbReference>
<dbReference type="Proteomes" id="UP000002402">
    <property type="component" value="Chromosome"/>
</dbReference>
<dbReference type="GO" id="GO:0005737">
    <property type="term" value="C:cytoplasm"/>
    <property type="evidence" value="ECO:0007669"/>
    <property type="project" value="UniProtKB-SubCell"/>
</dbReference>
<dbReference type="GO" id="GO:0051539">
    <property type="term" value="F:4 iron, 4 sulfur cluster binding"/>
    <property type="evidence" value="ECO:0007669"/>
    <property type="project" value="UniProtKB-UniRule"/>
</dbReference>
<dbReference type="GO" id="GO:0016992">
    <property type="term" value="F:lipoate synthase activity"/>
    <property type="evidence" value="ECO:0007669"/>
    <property type="project" value="UniProtKB-UniRule"/>
</dbReference>
<dbReference type="GO" id="GO:0046872">
    <property type="term" value="F:metal ion binding"/>
    <property type="evidence" value="ECO:0007669"/>
    <property type="project" value="UniProtKB-KW"/>
</dbReference>
<dbReference type="CDD" id="cd01335">
    <property type="entry name" value="Radical_SAM"/>
    <property type="match status" value="1"/>
</dbReference>
<dbReference type="FunFam" id="3.20.20.70:FF:000040">
    <property type="entry name" value="Lipoyl synthase"/>
    <property type="match status" value="1"/>
</dbReference>
<dbReference type="Gene3D" id="3.20.20.70">
    <property type="entry name" value="Aldolase class I"/>
    <property type="match status" value="1"/>
</dbReference>
<dbReference type="HAMAP" id="MF_00206">
    <property type="entry name" value="Lipoyl_synth"/>
    <property type="match status" value="1"/>
</dbReference>
<dbReference type="InterPro" id="IPR013785">
    <property type="entry name" value="Aldolase_TIM"/>
</dbReference>
<dbReference type="InterPro" id="IPR006638">
    <property type="entry name" value="Elp3/MiaA/NifB-like_rSAM"/>
</dbReference>
<dbReference type="InterPro" id="IPR031691">
    <property type="entry name" value="LIAS_N"/>
</dbReference>
<dbReference type="InterPro" id="IPR003698">
    <property type="entry name" value="Lipoyl_synth"/>
</dbReference>
<dbReference type="InterPro" id="IPR007197">
    <property type="entry name" value="rSAM"/>
</dbReference>
<dbReference type="NCBIfam" id="TIGR00510">
    <property type="entry name" value="lipA"/>
    <property type="match status" value="1"/>
</dbReference>
<dbReference type="NCBIfam" id="NF004019">
    <property type="entry name" value="PRK05481.1"/>
    <property type="match status" value="1"/>
</dbReference>
<dbReference type="NCBIfam" id="NF009544">
    <property type="entry name" value="PRK12928.1"/>
    <property type="match status" value="1"/>
</dbReference>
<dbReference type="PANTHER" id="PTHR10949">
    <property type="entry name" value="LIPOYL SYNTHASE"/>
    <property type="match status" value="1"/>
</dbReference>
<dbReference type="PANTHER" id="PTHR10949:SF0">
    <property type="entry name" value="LIPOYL SYNTHASE, MITOCHONDRIAL"/>
    <property type="match status" value="1"/>
</dbReference>
<dbReference type="Pfam" id="PF16881">
    <property type="entry name" value="LIAS_N"/>
    <property type="match status" value="1"/>
</dbReference>
<dbReference type="Pfam" id="PF04055">
    <property type="entry name" value="Radical_SAM"/>
    <property type="match status" value="1"/>
</dbReference>
<dbReference type="PIRSF" id="PIRSF005963">
    <property type="entry name" value="Lipoyl_synth"/>
    <property type="match status" value="1"/>
</dbReference>
<dbReference type="SFLD" id="SFLDF00271">
    <property type="entry name" value="lipoyl_synthase"/>
    <property type="match status" value="1"/>
</dbReference>
<dbReference type="SFLD" id="SFLDG01058">
    <property type="entry name" value="lipoyl_synthase_like"/>
    <property type="match status" value="1"/>
</dbReference>
<dbReference type="SMART" id="SM00729">
    <property type="entry name" value="Elp3"/>
    <property type="match status" value="1"/>
</dbReference>
<dbReference type="SUPFAM" id="SSF102114">
    <property type="entry name" value="Radical SAM enzymes"/>
    <property type="match status" value="1"/>
</dbReference>
<dbReference type="PROSITE" id="PS51918">
    <property type="entry name" value="RADICAL_SAM"/>
    <property type="match status" value="1"/>
</dbReference>
<protein>
    <recommendedName>
        <fullName evidence="1">Lipoyl synthase</fullName>
        <ecNumber evidence="1">2.8.1.8</ecNumber>
    </recommendedName>
    <alternativeName>
        <fullName evidence="1">Lip-syn</fullName>
        <shortName evidence="1">LS</shortName>
    </alternativeName>
    <alternativeName>
        <fullName evidence="1">Lipoate synthase</fullName>
    </alternativeName>
    <alternativeName>
        <fullName evidence="1">Lipoic acid synthase</fullName>
    </alternativeName>
    <alternativeName>
        <fullName evidence="1">Sulfur insertion protein LipA</fullName>
    </alternativeName>
</protein>
<proteinExistence type="inferred from homology"/>
<reference key="1">
    <citation type="journal article" date="2006" name="Proc. Natl. Acad. Sci. U.S.A.">
        <title>Evolution of sensory complexity recorded in a myxobacterial genome.</title>
        <authorList>
            <person name="Goldman B.S."/>
            <person name="Nierman W.C."/>
            <person name="Kaiser D."/>
            <person name="Slater S.C."/>
            <person name="Durkin A.S."/>
            <person name="Eisen J.A."/>
            <person name="Ronning C.M."/>
            <person name="Barbazuk W.B."/>
            <person name="Blanchard M."/>
            <person name="Field C."/>
            <person name="Halling C."/>
            <person name="Hinkle G."/>
            <person name="Iartchuk O."/>
            <person name="Kim H.S."/>
            <person name="Mackenzie C."/>
            <person name="Madupu R."/>
            <person name="Miller N."/>
            <person name="Shvartsbeyn A."/>
            <person name="Sullivan S.A."/>
            <person name="Vaudin M."/>
            <person name="Wiegand R."/>
            <person name="Kaplan H.B."/>
        </authorList>
    </citation>
    <scope>NUCLEOTIDE SEQUENCE [LARGE SCALE GENOMIC DNA]</scope>
    <source>
        <strain>DK1622</strain>
    </source>
</reference>
<keyword id="KW-0004">4Fe-4S</keyword>
<keyword id="KW-0963">Cytoplasm</keyword>
<keyword id="KW-0408">Iron</keyword>
<keyword id="KW-0411">Iron-sulfur</keyword>
<keyword id="KW-0479">Metal-binding</keyword>
<keyword id="KW-1185">Reference proteome</keyword>
<keyword id="KW-0949">S-adenosyl-L-methionine</keyword>
<keyword id="KW-0808">Transferase</keyword>
<sequence length="298" mass="33737">MTETTRKPEWLKVRLPHGEGYERVKAIVKRTKLATVCEEARCPNIAECWGGGTATVMLMGEVCTRACRFCHVKVGAPPPLDPMEPIHLAQAVKEMDLEYIVVTSVNRDDRPDGGASHFASAIRELRRESPRTIVEVLIPDFKGVEKDLTTVAEAKPHVVAHNVETVERLTPTVRDRRAKYHQSLRVLEYLKNRPEGLYTKTSVMVGLGETDAELEQTFKDLRDVGVDVLTLGQYLQPSQYHLRVERFVTPAQFEAYKTLAESYGFLYVASGPLVRSSYRAAEFFMKGLMERERLERLG</sequence>
<evidence type="ECO:0000255" key="1">
    <source>
        <dbReference type="HAMAP-Rule" id="MF_00206"/>
    </source>
</evidence>
<evidence type="ECO:0000255" key="2">
    <source>
        <dbReference type="PROSITE-ProRule" id="PRU01266"/>
    </source>
</evidence>
<evidence type="ECO:0000305" key="3"/>
<accession>Q1D4N0</accession>
<gene>
    <name evidence="1" type="primary">lipA</name>
    <name type="ordered locus">MXAN_4218</name>
</gene>